<feature type="chain" id="PRO_0000196047" description="Small ribosomal subunit protein bS1">
    <location>
        <begin position="1"/>
        <end position="391"/>
    </location>
</feature>
<feature type="domain" description="S1 motif 1" evidence="2">
    <location>
        <begin position="16"/>
        <end position="90"/>
    </location>
</feature>
<feature type="domain" description="S1 motif 2" evidence="2">
    <location>
        <begin position="108"/>
        <end position="173"/>
    </location>
</feature>
<feature type="domain" description="S1 motif 3" evidence="2">
    <location>
        <begin position="194"/>
        <end position="262"/>
    </location>
</feature>
<feature type="domain" description="S1 motif 4" evidence="2">
    <location>
        <begin position="279"/>
        <end position="348"/>
    </location>
</feature>
<gene>
    <name type="primary">rpsA</name>
    <name type="ordered locus">SACOL1516</name>
</gene>
<accession>Q5HFU7</accession>
<evidence type="ECO:0000250" key="1"/>
<evidence type="ECO:0000255" key="2">
    <source>
        <dbReference type="PROSITE-ProRule" id="PRU00180"/>
    </source>
</evidence>
<evidence type="ECO:0000305" key="3"/>
<sequence length="391" mass="43287">MTEEFNESMINDIKEGDKVTGEVQQVEDKQVVVHINGGKFNGIIPISQLSTHHIDSPSEVVKEGDEVEAYVTKVEFDEENETGAYILSRRQLETEKSYSYLQEKLDNNEIIEAKVTEVVKGGLVVDVGQRGFVPASLISTDFIEDFSVFDGQTIRIKVEELDPENNRVILSRKAVEQEENDAKKDQLLQSLNEGDVIDGKVARLTQFGAFIDIGGVDGLVHVSELSHEHVQTPEEVVSIGQDVKVKIKSIDRDTERISLSIKDTLPTPFENIKGQFHENDVIEGVVVRLANFGAFVEIAPGVQGLVHISEIAHKHIGTPGEVLEPGQQVNVKILGIDEENERVSLSIKATLPNEDVVESDPSTTKAYLENEEEDNPTIGDMIGDKLKNLKL</sequence>
<comment type="function">
    <text evidence="1">Binds mRNA; thus facilitating recognition of the initiation point. It is needed to translate mRNA with a short Shine-Dalgarno (SD) purine-rich sequence (By similarity).</text>
</comment>
<comment type="similarity">
    <text evidence="3">Belongs to the bacterial ribosomal protein bS1 family.</text>
</comment>
<proteinExistence type="inferred from homology"/>
<keyword id="KW-0677">Repeat</keyword>
<keyword id="KW-0687">Ribonucleoprotein</keyword>
<keyword id="KW-0689">Ribosomal protein</keyword>
<keyword id="KW-0694">RNA-binding</keyword>
<dbReference type="EMBL" id="CP000046">
    <property type="protein sequence ID" value="AAW36711.1"/>
    <property type="molecule type" value="Genomic_DNA"/>
</dbReference>
<dbReference type="RefSeq" id="WP_000133954.1">
    <property type="nucleotide sequence ID" value="NZ_JBGOFO010000003.1"/>
</dbReference>
<dbReference type="SMR" id="Q5HFU7"/>
<dbReference type="KEGG" id="sac:SACOL1516"/>
<dbReference type="HOGENOM" id="CLU_015805_4_5_9"/>
<dbReference type="Proteomes" id="UP000000530">
    <property type="component" value="Chromosome"/>
</dbReference>
<dbReference type="GO" id="GO:0022627">
    <property type="term" value="C:cytosolic small ribosomal subunit"/>
    <property type="evidence" value="ECO:0007669"/>
    <property type="project" value="TreeGrafter"/>
</dbReference>
<dbReference type="GO" id="GO:0003729">
    <property type="term" value="F:mRNA binding"/>
    <property type="evidence" value="ECO:0007669"/>
    <property type="project" value="TreeGrafter"/>
</dbReference>
<dbReference type="GO" id="GO:0003735">
    <property type="term" value="F:structural constituent of ribosome"/>
    <property type="evidence" value="ECO:0007669"/>
    <property type="project" value="TreeGrafter"/>
</dbReference>
<dbReference type="GO" id="GO:0006412">
    <property type="term" value="P:translation"/>
    <property type="evidence" value="ECO:0007669"/>
    <property type="project" value="TreeGrafter"/>
</dbReference>
<dbReference type="CDD" id="cd05687">
    <property type="entry name" value="S1_RPS1_repeat_ec1_hs1"/>
    <property type="match status" value="1"/>
</dbReference>
<dbReference type="CDD" id="cd04465">
    <property type="entry name" value="S1_RPS1_repeat_ec2_hs2"/>
    <property type="match status" value="1"/>
</dbReference>
<dbReference type="CDD" id="cd05688">
    <property type="entry name" value="S1_RPS1_repeat_ec3"/>
    <property type="match status" value="1"/>
</dbReference>
<dbReference type="FunFam" id="2.40.50.140:FF:000114">
    <property type="entry name" value="30S ribosomal protein S1"/>
    <property type="match status" value="2"/>
</dbReference>
<dbReference type="FunFam" id="2.40.50.140:FF:000166">
    <property type="entry name" value="30S ribosomal protein S1"/>
    <property type="match status" value="1"/>
</dbReference>
<dbReference type="FunFam" id="2.40.50.140:FF:000182">
    <property type="entry name" value="30S ribosomal protein S1"/>
    <property type="match status" value="1"/>
</dbReference>
<dbReference type="Gene3D" id="2.40.50.140">
    <property type="entry name" value="Nucleic acid-binding proteins"/>
    <property type="match status" value="4"/>
</dbReference>
<dbReference type="InterPro" id="IPR012340">
    <property type="entry name" value="NA-bd_OB-fold"/>
</dbReference>
<dbReference type="InterPro" id="IPR050437">
    <property type="entry name" value="Ribos_protein_bS1-like"/>
</dbReference>
<dbReference type="InterPro" id="IPR035104">
    <property type="entry name" value="Ribosomal_protein_S1-like"/>
</dbReference>
<dbReference type="InterPro" id="IPR003029">
    <property type="entry name" value="S1_domain"/>
</dbReference>
<dbReference type="NCBIfam" id="NF005208">
    <property type="entry name" value="PRK06676.1"/>
    <property type="match status" value="1"/>
</dbReference>
<dbReference type="PANTHER" id="PTHR10724">
    <property type="entry name" value="30S RIBOSOMAL PROTEIN S1"/>
    <property type="match status" value="1"/>
</dbReference>
<dbReference type="PANTHER" id="PTHR10724:SF7">
    <property type="entry name" value="SMALL RIBOSOMAL SUBUNIT PROTEIN BS1C"/>
    <property type="match status" value="1"/>
</dbReference>
<dbReference type="Pfam" id="PF00575">
    <property type="entry name" value="S1"/>
    <property type="match status" value="4"/>
</dbReference>
<dbReference type="PRINTS" id="PR00681">
    <property type="entry name" value="RIBOSOMALS1"/>
</dbReference>
<dbReference type="SMART" id="SM00316">
    <property type="entry name" value="S1"/>
    <property type="match status" value="4"/>
</dbReference>
<dbReference type="SUPFAM" id="SSF50249">
    <property type="entry name" value="Nucleic acid-binding proteins"/>
    <property type="match status" value="4"/>
</dbReference>
<dbReference type="PROSITE" id="PS50126">
    <property type="entry name" value="S1"/>
    <property type="match status" value="4"/>
</dbReference>
<organism>
    <name type="scientific">Staphylococcus aureus (strain COL)</name>
    <dbReference type="NCBI Taxonomy" id="93062"/>
    <lineage>
        <taxon>Bacteria</taxon>
        <taxon>Bacillati</taxon>
        <taxon>Bacillota</taxon>
        <taxon>Bacilli</taxon>
        <taxon>Bacillales</taxon>
        <taxon>Staphylococcaceae</taxon>
        <taxon>Staphylococcus</taxon>
    </lineage>
</organism>
<reference key="1">
    <citation type="journal article" date="2005" name="J. Bacteriol.">
        <title>Insights on evolution of virulence and resistance from the complete genome analysis of an early methicillin-resistant Staphylococcus aureus strain and a biofilm-producing methicillin-resistant Staphylococcus epidermidis strain.</title>
        <authorList>
            <person name="Gill S.R."/>
            <person name="Fouts D.E."/>
            <person name="Archer G.L."/>
            <person name="Mongodin E.F."/>
            <person name="DeBoy R.T."/>
            <person name="Ravel J."/>
            <person name="Paulsen I.T."/>
            <person name="Kolonay J.F."/>
            <person name="Brinkac L.M."/>
            <person name="Beanan M.J."/>
            <person name="Dodson R.J."/>
            <person name="Daugherty S.C."/>
            <person name="Madupu R."/>
            <person name="Angiuoli S.V."/>
            <person name="Durkin A.S."/>
            <person name="Haft D.H."/>
            <person name="Vamathevan J.J."/>
            <person name="Khouri H."/>
            <person name="Utterback T.R."/>
            <person name="Lee C."/>
            <person name="Dimitrov G."/>
            <person name="Jiang L."/>
            <person name="Qin H."/>
            <person name="Weidman J."/>
            <person name="Tran K."/>
            <person name="Kang K.H."/>
            <person name="Hance I.R."/>
            <person name="Nelson K.E."/>
            <person name="Fraser C.M."/>
        </authorList>
    </citation>
    <scope>NUCLEOTIDE SEQUENCE [LARGE SCALE GENOMIC DNA]</scope>
    <source>
        <strain>COL</strain>
    </source>
</reference>
<protein>
    <recommendedName>
        <fullName evidence="3">Small ribosomal subunit protein bS1</fullName>
    </recommendedName>
    <alternativeName>
        <fullName>30S ribosomal protein S1</fullName>
    </alternativeName>
</protein>
<name>RS1_STAAC</name>